<organism>
    <name type="scientific">Pelagibacter ubique (strain HTCC1062)</name>
    <dbReference type="NCBI Taxonomy" id="335992"/>
    <lineage>
        <taxon>Bacteria</taxon>
        <taxon>Pseudomonadati</taxon>
        <taxon>Pseudomonadota</taxon>
        <taxon>Alphaproteobacteria</taxon>
        <taxon>Candidatus Pelagibacterales</taxon>
        <taxon>Candidatus Pelagibacteraceae</taxon>
        <taxon>Candidatus Pelagibacter</taxon>
    </lineage>
</organism>
<accession>Q4FNS4</accession>
<evidence type="ECO:0000255" key="1">
    <source>
        <dbReference type="HAMAP-Rule" id="MF_00528"/>
    </source>
</evidence>
<feature type="chain" id="PRO_0000267362" description="Nucleoside triphosphate pyrophosphatase">
    <location>
        <begin position="1"/>
        <end position="195"/>
    </location>
</feature>
<feature type="active site" description="Proton acceptor" evidence="1">
    <location>
        <position position="76"/>
    </location>
</feature>
<dbReference type="EC" id="3.6.1.9" evidence="1"/>
<dbReference type="EMBL" id="CP000084">
    <property type="protein sequence ID" value="AAZ21165.1"/>
    <property type="molecule type" value="Genomic_DNA"/>
</dbReference>
<dbReference type="RefSeq" id="WP_011281637.1">
    <property type="nucleotide sequence ID" value="NC_007205.1"/>
</dbReference>
<dbReference type="SMR" id="Q4FNS4"/>
<dbReference type="STRING" id="335992.SAR11_0342"/>
<dbReference type="GeneID" id="66294841"/>
<dbReference type="KEGG" id="pub:SAR11_0342"/>
<dbReference type="eggNOG" id="COG0424">
    <property type="taxonomic scope" value="Bacteria"/>
</dbReference>
<dbReference type="HOGENOM" id="CLU_040416_1_1_5"/>
<dbReference type="OrthoDB" id="9813962at2"/>
<dbReference type="Proteomes" id="UP000002528">
    <property type="component" value="Chromosome"/>
</dbReference>
<dbReference type="GO" id="GO:0005737">
    <property type="term" value="C:cytoplasm"/>
    <property type="evidence" value="ECO:0007669"/>
    <property type="project" value="UniProtKB-SubCell"/>
</dbReference>
<dbReference type="GO" id="GO:0047429">
    <property type="term" value="F:nucleoside triphosphate diphosphatase activity"/>
    <property type="evidence" value="ECO:0007669"/>
    <property type="project" value="UniProtKB-EC"/>
</dbReference>
<dbReference type="GO" id="GO:0009117">
    <property type="term" value="P:nucleotide metabolic process"/>
    <property type="evidence" value="ECO:0007669"/>
    <property type="project" value="UniProtKB-KW"/>
</dbReference>
<dbReference type="CDD" id="cd00555">
    <property type="entry name" value="Maf"/>
    <property type="match status" value="1"/>
</dbReference>
<dbReference type="Gene3D" id="3.90.950.10">
    <property type="match status" value="1"/>
</dbReference>
<dbReference type="HAMAP" id="MF_00528">
    <property type="entry name" value="Maf"/>
    <property type="match status" value="1"/>
</dbReference>
<dbReference type="InterPro" id="IPR029001">
    <property type="entry name" value="ITPase-like_fam"/>
</dbReference>
<dbReference type="InterPro" id="IPR003697">
    <property type="entry name" value="Maf-like"/>
</dbReference>
<dbReference type="NCBIfam" id="TIGR00172">
    <property type="entry name" value="maf"/>
    <property type="match status" value="1"/>
</dbReference>
<dbReference type="PANTHER" id="PTHR43213">
    <property type="entry name" value="BIFUNCTIONAL DTTP/UTP PYROPHOSPHATASE/METHYLTRANSFERASE PROTEIN-RELATED"/>
    <property type="match status" value="1"/>
</dbReference>
<dbReference type="PANTHER" id="PTHR43213:SF5">
    <property type="entry name" value="BIFUNCTIONAL DTTP_UTP PYROPHOSPHATASE_METHYLTRANSFERASE PROTEIN-RELATED"/>
    <property type="match status" value="1"/>
</dbReference>
<dbReference type="Pfam" id="PF02545">
    <property type="entry name" value="Maf"/>
    <property type="match status" value="1"/>
</dbReference>
<dbReference type="PIRSF" id="PIRSF006305">
    <property type="entry name" value="Maf"/>
    <property type="match status" value="1"/>
</dbReference>
<dbReference type="SUPFAM" id="SSF52972">
    <property type="entry name" value="ITPase-like"/>
    <property type="match status" value="1"/>
</dbReference>
<proteinExistence type="inferred from homology"/>
<reference key="1">
    <citation type="journal article" date="2005" name="Science">
        <title>Genome streamlining in a cosmopolitan oceanic bacterium.</title>
        <authorList>
            <person name="Giovannoni S.J."/>
            <person name="Tripp H.J."/>
            <person name="Givan S."/>
            <person name="Podar M."/>
            <person name="Vergin K.L."/>
            <person name="Baptista D."/>
            <person name="Bibbs L."/>
            <person name="Eads J."/>
            <person name="Richardson T.H."/>
            <person name="Noordewier M."/>
            <person name="Rappe M.S."/>
            <person name="Short J.M."/>
            <person name="Carrington J.C."/>
            <person name="Mathur E.J."/>
        </authorList>
    </citation>
    <scope>NUCLEOTIDE SEQUENCE [LARGE SCALE GENOMIC DNA]</scope>
    <source>
        <strain>HTCC1062</strain>
    </source>
</reference>
<gene>
    <name type="ordered locus">SAR11_0342</name>
</gene>
<name>NTPP_PELUB</name>
<protein>
    <recommendedName>
        <fullName evidence="1">Nucleoside triphosphate pyrophosphatase</fullName>
        <ecNumber evidence="1">3.6.1.9</ecNumber>
    </recommendedName>
    <alternativeName>
        <fullName evidence="1">Nucleotide pyrophosphatase</fullName>
        <shortName evidence="1">Nucleotide PPase</shortName>
    </alternativeName>
</protein>
<sequence>MVKEIILASKSGVRKKILEENNIQFRVEPSNVDEDSVKESLLKEKVTPTIISKNLAELKANKISQKFTEEIVLGADSVIDLEGKIISKPNDREEALEILKRMNGKTHQLISSVCISRGGSMIWNYTDKASLTMKNMTFLELENYLKKISDKDLYAYNVYQIEGEGRNLFSKIEGDEDTIMGLPVKKIKEYLKIIK</sequence>
<comment type="function">
    <text evidence="1">Nucleoside triphosphate pyrophosphatase. May have a dual role in cell division arrest and in preventing the incorporation of modified nucleotides into cellular nucleic acids.</text>
</comment>
<comment type="catalytic activity">
    <reaction evidence="1">
        <text>a ribonucleoside 5'-triphosphate + H2O = a ribonucleoside 5'-phosphate + diphosphate + H(+)</text>
        <dbReference type="Rhea" id="RHEA:23996"/>
        <dbReference type="ChEBI" id="CHEBI:15377"/>
        <dbReference type="ChEBI" id="CHEBI:15378"/>
        <dbReference type="ChEBI" id="CHEBI:33019"/>
        <dbReference type="ChEBI" id="CHEBI:58043"/>
        <dbReference type="ChEBI" id="CHEBI:61557"/>
        <dbReference type="EC" id="3.6.1.9"/>
    </reaction>
</comment>
<comment type="catalytic activity">
    <reaction evidence="1">
        <text>a 2'-deoxyribonucleoside 5'-triphosphate + H2O = a 2'-deoxyribonucleoside 5'-phosphate + diphosphate + H(+)</text>
        <dbReference type="Rhea" id="RHEA:44644"/>
        <dbReference type="ChEBI" id="CHEBI:15377"/>
        <dbReference type="ChEBI" id="CHEBI:15378"/>
        <dbReference type="ChEBI" id="CHEBI:33019"/>
        <dbReference type="ChEBI" id="CHEBI:61560"/>
        <dbReference type="ChEBI" id="CHEBI:65317"/>
        <dbReference type="EC" id="3.6.1.9"/>
    </reaction>
</comment>
<comment type="cofactor">
    <cofactor evidence="1">
        <name>a divalent metal cation</name>
        <dbReference type="ChEBI" id="CHEBI:60240"/>
    </cofactor>
</comment>
<comment type="subcellular location">
    <subcellularLocation>
        <location evidence="1">Cytoplasm</location>
    </subcellularLocation>
</comment>
<comment type="similarity">
    <text evidence="1">Belongs to the Maf family.</text>
</comment>
<keyword id="KW-0963">Cytoplasm</keyword>
<keyword id="KW-0378">Hydrolase</keyword>
<keyword id="KW-0546">Nucleotide metabolism</keyword>
<keyword id="KW-1185">Reference proteome</keyword>